<gene>
    <name type="primary">Slc38a11</name>
</gene>
<accession>D3Z813</accession>
<proteinExistence type="evidence at transcript level"/>
<organism>
    <name type="scientific">Rattus norvegicus</name>
    <name type="common">Rat</name>
    <dbReference type="NCBI Taxonomy" id="10116"/>
    <lineage>
        <taxon>Eukaryota</taxon>
        <taxon>Metazoa</taxon>
        <taxon>Chordata</taxon>
        <taxon>Craniata</taxon>
        <taxon>Vertebrata</taxon>
        <taxon>Euteleostomi</taxon>
        <taxon>Mammalia</taxon>
        <taxon>Eutheria</taxon>
        <taxon>Euarchontoglires</taxon>
        <taxon>Glires</taxon>
        <taxon>Rodentia</taxon>
        <taxon>Myomorpha</taxon>
        <taxon>Muroidea</taxon>
        <taxon>Muridae</taxon>
        <taxon>Murinae</taxon>
        <taxon>Rattus</taxon>
    </lineage>
</organism>
<evidence type="ECO:0000255" key="1"/>
<evidence type="ECO:0000256" key="2">
    <source>
        <dbReference type="SAM" id="MobiDB-lite"/>
    </source>
</evidence>
<evidence type="ECO:0000269" key="3">
    <source>
    </source>
</evidence>
<evidence type="ECO:0000305" key="4"/>
<name>S38AB_RAT</name>
<keyword id="KW-0029">Amino-acid transport</keyword>
<keyword id="KW-0406">Ion transport</keyword>
<keyword id="KW-0472">Membrane</keyword>
<keyword id="KW-1185">Reference proteome</keyword>
<keyword id="KW-0915">Sodium</keyword>
<keyword id="KW-0739">Sodium transport</keyword>
<keyword id="KW-0812">Transmembrane</keyword>
<keyword id="KW-1133">Transmembrane helix</keyword>
<keyword id="KW-0813">Transport</keyword>
<sequence>MSYQQPQLRGPLQRETDPSDRESLVSGHEHGGKSSQSAAVFNVVNSVIGSGIIGLPYSMKQAGFPLGILLLFWVSYITDFSLVLLIKGGALSGTDSYQSLVNKTFGFPGYLLLSTLQFMYPFIAMISYNIITGDTLSKVFQRLPGVDPGSWFISRHFIIVVSTVTCTLPLSLYRDIAKLGKISFISTILTAVILGVVVTRTISLGPNIPKTDNAWVFARPNAIQAIGVMSFAFICHHNCFLVYGSLEEPTVAKWRRVIHTSILVSVFICVLFATCGYFTFTGFTQGDLFENYCRSDDLVTFGRFCYGITVILTYPIECFVTREVITNVFFGGALSSVFHVTLTAAIVTAATLISLLIDCLGIVLELNGVLCAAPLIFIIPSACYLKLSEEPRTHSDKLMACVMFPVGAVVMVAGFVMAITNPQDCTHGQEMFYCFPDNISLTNISHSPRQLTA</sequence>
<feature type="chain" id="PRO_0000434578" description="Putative sodium-coupled neutral amino acid transporter 11">
    <location>
        <begin position="1"/>
        <end position="453"/>
    </location>
</feature>
<feature type="transmembrane region" description="Helical" evidence="1">
    <location>
        <begin position="39"/>
        <end position="59"/>
    </location>
</feature>
<feature type="transmembrane region" description="Helical" evidence="1">
    <location>
        <begin position="66"/>
        <end position="86"/>
    </location>
</feature>
<feature type="transmembrane region" description="Helical" evidence="1">
    <location>
        <begin position="106"/>
        <end position="126"/>
    </location>
</feature>
<feature type="transmembrane region" description="Helical" evidence="1">
    <location>
        <begin position="152"/>
        <end position="172"/>
    </location>
</feature>
<feature type="transmembrane region" description="Helical" evidence="1">
    <location>
        <begin position="179"/>
        <end position="199"/>
    </location>
</feature>
<feature type="transmembrane region" description="Helical" evidence="1">
    <location>
        <begin position="222"/>
        <end position="242"/>
    </location>
</feature>
<feature type="transmembrane region" description="Helical" evidence="1">
    <location>
        <begin position="262"/>
        <end position="282"/>
    </location>
</feature>
<feature type="transmembrane region" description="Helical" evidence="1">
    <location>
        <begin position="299"/>
        <end position="319"/>
    </location>
</feature>
<feature type="transmembrane region" description="Helical" evidence="1">
    <location>
        <begin position="337"/>
        <end position="357"/>
    </location>
</feature>
<feature type="transmembrane region" description="Helical" evidence="1">
    <location>
        <begin position="359"/>
        <end position="379"/>
    </location>
</feature>
<feature type="transmembrane region" description="Helical" evidence="1">
    <location>
        <begin position="399"/>
        <end position="419"/>
    </location>
</feature>
<feature type="region of interest" description="Disordered" evidence="2">
    <location>
        <begin position="1"/>
        <end position="34"/>
    </location>
</feature>
<feature type="compositionally biased region" description="Basic and acidic residues" evidence="2">
    <location>
        <begin position="12"/>
        <end position="32"/>
    </location>
</feature>
<comment type="function">
    <text evidence="4">Putative sodium-dependent amino acid/proton antiporter.</text>
</comment>
<comment type="subcellular location">
    <subcellularLocation>
        <location evidence="1">Membrane</location>
        <topology evidence="1">Multi-pass membrane protein</topology>
    </subcellularLocation>
</comment>
<comment type="tissue specificity">
    <text evidence="3">Widely expressed.</text>
</comment>
<comment type="similarity">
    <text evidence="4">Belongs to the amino acid/polyamine transporter 2 family.</text>
</comment>
<dbReference type="EMBL" id="AABR07052401">
    <property type="status" value="NOT_ANNOTATED_CDS"/>
    <property type="molecule type" value="Genomic_DNA"/>
</dbReference>
<dbReference type="SMR" id="D3Z813"/>
<dbReference type="FunCoup" id="D3Z813">
    <property type="interactions" value="65"/>
</dbReference>
<dbReference type="STRING" id="10116.ENSRNOP00000055741"/>
<dbReference type="PhosphoSitePlus" id="D3Z813"/>
<dbReference type="PaxDb" id="10116-ENSRNOP00000055741"/>
<dbReference type="AGR" id="RGD:1306005"/>
<dbReference type="RGD" id="1306005">
    <property type="gene designation" value="Slc38a11"/>
</dbReference>
<dbReference type="VEuPathDB" id="HostDB:ENSRNOG00000004966"/>
<dbReference type="eggNOG" id="KOG1305">
    <property type="taxonomic scope" value="Eukaryota"/>
</dbReference>
<dbReference type="HOGENOM" id="CLU_009020_4_2_1"/>
<dbReference type="InParanoid" id="D3Z813"/>
<dbReference type="TreeFam" id="TF328787"/>
<dbReference type="PRO" id="PR:D3Z813"/>
<dbReference type="Proteomes" id="UP000002494">
    <property type="component" value="Chromosome 3"/>
</dbReference>
<dbReference type="Bgee" id="ENSRNOG00000004966">
    <property type="expression patterns" value="Expressed in stomach and 8 other cell types or tissues"/>
</dbReference>
<dbReference type="ExpressionAtlas" id="D3Z813">
    <property type="expression patterns" value="baseline and differential"/>
</dbReference>
<dbReference type="GO" id="GO:0016020">
    <property type="term" value="C:membrane"/>
    <property type="evidence" value="ECO:0000318"/>
    <property type="project" value="GO_Central"/>
</dbReference>
<dbReference type="GO" id="GO:0022853">
    <property type="term" value="F:active monoatomic ion transmembrane transporter activity"/>
    <property type="evidence" value="ECO:0007669"/>
    <property type="project" value="UniProtKB-ARBA"/>
</dbReference>
<dbReference type="GO" id="GO:0022890">
    <property type="term" value="F:inorganic cation transmembrane transporter activity"/>
    <property type="evidence" value="ECO:0007669"/>
    <property type="project" value="UniProtKB-ARBA"/>
</dbReference>
<dbReference type="GO" id="GO:0015179">
    <property type="term" value="F:L-amino acid transmembrane transporter activity"/>
    <property type="evidence" value="ECO:0000318"/>
    <property type="project" value="GO_Central"/>
</dbReference>
<dbReference type="GO" id="GO:0008324">
    <property type="term" value="F:monoatomic cation transmembrane transporter activity"/>
    <property type="evidence" value="ECO:0007669"/>
    <property type="project" value="UniProtKB-ARBA"/>
</dbReference>
<dbReference type="GO" id="GO:0015175">
    <property type="term" value="F:neutral L-amino acid transmembrane transporter activity"/>
    <property type="evidence" value="ECO:0007669"/>
    <property type="project" value="UniProtKB-ARBA"/>
</dbReference>
<dbReference type="GO" id="GO:0015291">
    <property type="term" value="F:secondary active transmembrane transporter activity"/>
    <property type="evidence" value="ECO:0007669"/>
    <property type="project" value="UniProtKB-ARBA"/>
</dbReference>
<dbReference type="GO" id="GO:0003333">
    <property type="term" value="P:amino acid transmembrane transport"/>
    <property type="evidence" value="ECO:0000318"/>
    <property type="project" value="GO_Central"/>
</dbReference>
<dbReference type="GO" id="GO:0098662">
    <property type="term" value="P:inorganic cation transmembrane transport"/>
    <property type="evidence" value="ECO:0007669"/>
    <property type="project" value="UniProtKB-ARBA"/>
</dbReference>
<dbReference type="GO" id="GO:0006814">
    <property type="term" value="P:sodium ion transport"/>
    <property type="evidence" value="ECO:0007669"/>
    <property type="project" value="UniProtKB-KW"/>
</dbReference>
<dbReference type="InterPro" id="IPR013057">
    <property type="entry name" value="AA_transpt_TM"/>
</dbReference>
<dbReference type="PANTHER" id="PTHR22950">
    <property type="entry name" value="AMINO ACID TRANSPORTER"/>
    <property type="match status" value="1"/>
</dbReference>
<dbReference type="PANTHER" id="PTHR22950:SF458">
    <property type="entry name" value="SODIUM-COUPLED NEUTRAL AMINO ACID TRANSPORTER 11-RELATED"/>
    <property type="match status" value="1"/>
</dbReference>
<dbReference type="Pfam" id="PF01490">
    <property type="entry name" value="Aa_trans"/>
    <property type="match status" value="1"/>
</dbReference>
<reference key="1">
    <citation type="journal article" date="2004" name="Nature">
        <title>Genome sequence of the Brown Norway rat yields insights into mammalian evolution.</title>
        <authorList>
            <person name="Gibbs R.A."/>
            <person name="Weinstock G.M."/>
            <person name="Metzker M.L."/>
            <person name="Muzny D.M."/>
            <person name="Sodergren E.J."/>
            <person name="Scherer S."/>
            <person name="Scott G."/>
            <person name="Steffen D."/>
            <person name="Worley K.C."/>
            <person name="Burch P.E."/>
            <person name="Okwuonu G."/>
            <person name="Hines S."/>
            <person name="Lewis L."/>
            <person name="Deramo C."/>
            <person name="Delgado O."/>
            <person name="Dugan-Rocha S."/>
            <person name="Miner G."/>
            <person name="Morgan M."/>
            <person name="Hawes A."/>
            <person name="Gill R."/>
            <person name="Holt R.A."/>
            <person name="Adams M.D."/>
            <person name="Amanatides P.G."/>
            <person name="Baden-Tillson H."/>
            <person name="Barnstead M."/>
            <person name="Chin S."/>
            <person name="Evans C.A."/>
            <person name="Ferriera S."/>
            <person name="Fosler C."/>
            <person name="Glodek A."/>
            <person name="Gu Z."/>
            <person name="Jennings D."/>
            <person name="Kraft C.L."/>
            <person name="Nguyen T."/>
            <person name="Pfannkoch C.M."/>
            <person name="Sitter C."/>
            <person name="Sutton G.G."/>
            <person name="Venter J.C."/>
            <person name="Woodage T."/>
            <person name="Smith D."/>
            <person name="Lee H.-M."/>
            <person name="Gustafson E."/>
            <person name="Cahill P."/>
            <person name="Kana A."/>
            <person name="Doucette-Stamm L."/>
            <person name="Weinstock K."/>
            <person name="Fechtel K."/>
            <person name="Weiss R.B."/>
            <person name="Dunn D.M."/>
            <person name="Green E.D."/>
            <person name="Blakesley R.W."/>
            <person name="Bouffard G.G."/>
            <person name="De Jong P.J."/>
            <person name="Osoegawa K."/>
            <person name="Zhu B."/>
            <person name="Marra M."/>
            <person name="Schein J."/>
            <person name="Bosdet I."/>
            <person name="Fjell C."/>
            <person name="Jones S."/>
            <person name="Krzywinski M."/>
            <person name="Mathewson C."/>
            <person name="Siddiqui A."/>
            <person name="Wye N."/>
            <person name="McPherson J."/>
            <person name="Zhao S."/>
            <person name="Fraser C.M."/>
            <person name="Shetty J."/>
            <person name="Shatsman S."/>
            <person name="Geer K."/>
            <person name="Chen Y."/>
            <person name="Abramzon S."/>
            <person name="Nierman W.C."/>
            <person name="Havlak P.H."/>
            <person name="Chen R."/>
            <person name="Durbin K.J."/>
            <person name="Egan A."/>
            <person name="Ren Y."/>
            <person name="Song X.-Z."/>
            <person name="Li B."/>
            <person name="Liu Y."/>
            <person name="Qin X."/>
            <person name="Cawley S."/>
            <person name="Cooney A.J."/>
            <person name="D'Souza L.M."/>
            <person name="Martin K."/>
            <person name="Wu J.Q."/>
            <person name="Gonzalez-Garay M.L."/>
            <person name="Jackson A.R."/>
            <person name="Kalafus K.J."/>
            <person name="McLeod M.P."/>
            <person name="Milosavljevic A."/>
            <person name="Virk D."/>
            <person name="Volkov A."/>
            <person name="Wheeler D.A."/>
            <person name="Zhang Z."/>
            <person name="Bailey J.A."/>
            <person name="Eichler E.E."/>
            <person name="Tuzun E."/>
            <person name="Birney E."/>
            <person name="Mongin E."/>
            <person name="Ureta-Vidal A."/>
            <person name="Woodwark C."/>
            <person name="Zdobnov E."/>
            <person name="Bork P."/>
            <person name="Suyama M."/>
            <person name="Torrents D."/>
            <person name="Alexandersson M."/>
            <person name="Trask B.J."/>
            <person name="Young J.M."/>
            <person name="Huang H."/>
            <person name="Wang H."/>
            <person name="Xing H."/>
            <person name="Daniels S."/>
            <person name="Gietzen D."/>
            <person name="Schmidt J."/>
            <person name="Stevens K."/>
            <person name="Vitt U."/>
            <person name="Wingrove J."/>
            <person name="Camara F."/>
            <person name="Mar Alba M."/>
            <person name="Abril J.F."/>
            <person name="Guigo R."/>
            <person name="Smit A."/>
            <person name="Dubchak I."/>
            <person name="Rubin E.M."/>
            <person name="Couronne O."/>
            <person name="Poliakov A."/>
            <person name="Huebner N."/>
            <person name="Ganten D."/>
            <person name="Goesele C."/>
            <person name="Hummel O."/>
            <person name="Kreitler T."/>
            <person name="Lee Y.-A."/>
            <person name="Monti J."/>
            <person name="Schulz H."/>
            <person name="Zimdahl H."/>
            <person name="Himmelbauer H."/>
            <person name="Lehrach H."/>
            <person name="Jacob H.J."/>
            <person name="Bromberg S."/>
            <person name="Gullings-Handley J."/>
            <person name="Jensen-Seaman M.I."/>
            <person name="Kwitek A.E."/>
            <person name="Lazar J."/>
            <person name="Pasko D."/>
            <person name="Tonellato P.J."/>
            <person name="Twigger S."/>
            <person name="Ponting C.P."/>
            <person name="Duarte J.M."/>
            <person name="Rice S."/>
            <person name="Goodstadt L."/>
            <person name="Beatson S.A."/>
            <person name="Emes R.D."/>
            <person name="Winter E.E."/>
            <person name="Webber C."/>
            <person name="Brandt P."/>
            <person name="Nyakatura G."/>
            <person name="Adetobi M."/>
            <person name="Chiaromonte F."/>
            <person name="Elnitski L."/>
            <person name="Eswara P."/>
            <person name="Hardison R.C."/>
            <person name="Hou M."/>
            <person name="Kolbe D."/>
            <person name="Makova K."/>
            <person name="Miller W."/>
            <person name="Nekrutenko A."/>
            <person name="Riemer C."/>
            <person name="Schwartz S."/>
            <person name="Taylor J."/>
            <person name="Yang S."/>
            <person name="Zhang Y."/>
            <person name="Lindpaintner K."/>
            <person name="Andrews T.D."/>
            <person name="Caccamo M."/>
            <person name="Clamp M."/>
            <person name="Clarke L."/>
            <person name="Curwen V."/>
            <person name="Durbin R.M."/>
            <person name="Eyras E."/>
            <person name="Searle S.M."/>
            <person name="Cooper G.M."/>
            <person name="Batzoglou S."/>
            <person name="Brudno M."/>
            <person name="Sidow A."/>
            <person name="Stone E.A."/>
            <person name="Payseur B.A."/>
            <person name="Bourque G."/>
            <person name="Lopez-Otin C."/>
            <person name="Puente X.S."/>
            <person name="Chakrabarti K."/>
            <person name="Chatterji S."/>
            <person name="Dewey C."/>
            <person name="Pachter L."/>
            <person name="Bray N."/>
            <person name="Yap V.B."/>
            <person name="Caspi A."/>
            <person name="Tesler G."/>
            <person name="Pevzner P.A."/>
            <person name="Haussler D."/>
            <person name="Roskin K.M."/>
            <person name="Baertsch R."/>
            <person name="Clawson H."/>
            <person name="Furey T.S."/>
            <person name="Hinrichs A.S."/>
            <person name="Karolchik D."/>
            <person name="Kent W.J."/>
            <person name="Rosenbloom K.R."/>
            <person name="Trumbower H."/>
            <person name="Weirauch M."/>
            <person name="Cooper D.N."/>
            <person name="Stenson P.D."/>
            <person name="Ma B."/>
            <person name="Brent M."/>
            <person name="Arumugam M."/>
            <person name="Shteynberg D."/>
            <person name="Copley R.R."/>
            <person name="Taylor M.S."/>
            <person name="Riethman H."/>
            <person name="Mudunuri U."/>
            <person name="Peterson J."/>
            <person name="Guyer M."/>
            <person name="Felsenfeld A."/>
            <person name="Old S."/>
            <person name="Mockrin S."/>
            <person name="Collins F.S."/>
        </authorList>
    </citation>
    <scope>NUCLEOTIDE SEQUENCE [LARGE SCALE GENOMIC DNA]</scope>
    <source>
        <strain>Brown Norway</strain>
    </source>
</reference>
<reference key="2">
    <citation type="journal article" date="2008" name="J. Mol. Neurosci.">
        <title>The evolutionary history and tissue mapping of amino acid transporters belonging to solute carrier families SLC32, SLC36, and SLC38.</title>
        <authorList>
            <person name="Sundberg B.E."/>
            <person name="Waaaag E."/>
            <person name="Jacobsson J.A."/>
            <person name="Stephansson O."/>
            <person name="Rumaks J."/>
            <person name="Svirskis S."/>
            <person name="Alsioe J."/>
            <person name="Roman E."/>
            <person name="Ebendal T."/>
            <person name="Klusa V."/>
            <person name="Fredriksson R."/>
        </authorList>
    </citation>
    <scope>TISSUE SPECIFICITY</scope>
</reference>
<protein>
    <recommendedName>
        <fullName>Putative sodium-coupled neutral amino acid transporter 11</fullName>
    </recommendedName>
    <alternativeName>
        <fullName>Solute carrier family 38 member 11</fullName>
    </alternativeName>
</protein>